<feature type="chain" id="PRO_0000197899" description="Exodeoxyribonuclease 7 large subunit">
    <location>
        <begin position="1"/>
        <end position="446"/>
    </location>
</feature>
<reference key="1">
    <citation type="journal article" date="2000" name="Nature">
        <title>DNA sequence of both chromosomes of the cholera pathogen Vibrio cholerae.</title>
        <authorList>
            <person name="Heidelberg J.F."/>
            <person name="Eisen J.A."/>
            <person name="Nelson W.C."/>
            <person name="Clayton R.A."/>
            <person name="Gwinn M.L."/>
            <person name="Dodson R.J."/>
            <person name="Haft D.H."/>
            <person name="Hickey E.K."/>
            <person name="Peterson J.D."/>
            <person name="Umayam L.A."/>
            <person name="Gill S.R."/>
            <person name="Nelson K.E."/>
            <person name="Read T.D."/>
            <person name="Tettelin H."/>
            <person name="Richardson D.L."/>
            <person name="Ermolaeva M.D."/>
            <person name="Vamathevan J.J."/>
            <person name="Bass S."/>
            <person name="Qin H."/>
            <person name="Dragoi I."/>
            <person name="Sellers P."/>
            <person name="McDonald L.A."/>
            <person name="Utterback T.R."/>
            <person name="Fleischmann R.D."/>
            <person name="Nierman W.C."/>
            <person name="White O."/>
            <person name="Salzberg S.L."/>
            <person name="Smith H.O."/>
            <person name="Colwell R.R."/>
            <person name="Mekalanos J.J."/>
            <person name="Venter J.C."/>
            <person name="Fraser C.M."/>
        </authorList>
    </citation>
    <scope>NUCLEOTIDE SEQUENCE [LARGE SCALE GENOMIC DNA]</scope>
    <source>
        <strain>ATCC 39315 / El Tor Inaba N16961</strain>
    </source>
</reference>
<keyword id="KW-0963">Cytoplasm</keyword>
<keyword id="KW-0269">Exonuclease</keyword>
<keyword id="KW-0378">Hydrolase</keyword>
<keyword id="KW-0540">Nuclease</keyword>
<keyword id="KW-1185">Reference proteome</keyword>
<sequence length="446" mass="50543">MSSSLANRNIYTVSRLNSEVRLLLENEMGIVWLVGEISNFSAPVSGHWYLTLKDSQAQVKCAMFKGNNRLVNFKPQNGQQVLVKARLSLYEPRGDYQIILESMQPEGDGRLQQQFEQLKMQLAAEGLFAQTRKKPLPENPRCVGIITSRTGAALHDILHVLKRRDPNLPVVIYPTLVQGEEAAIQIAQAIGRANTRAECDVLIVGRGGGSLEDLWCFNHEIVARTIAASEIPIISAVGHEIDVTIADFVADVRAPTPSAAAELVSRDHRHKQQALHQWQAKLASTMRHYLAQQETQFARLQHKLDKQHPQARLERQQQQLDELSLRLEQKMQQRLATQQQRWDRLSHKIELHSPIHLIRQQRFNLIQQEQRINQSIQRYLIQSRHQLALLSEKLDAVSPLATLARGYSVTRTTQGELVRQSAQVKPGDTLVTQLMDGEILSTVNSR</sequence>
<gene>
    <name evidence="1" type="primary">xseA</name>
    <name type="ordered locus">VC_0766</name>
</gene>
<proteinExistence type="inferred from homology"/>
<accession>Q9KTW4</accession>
<comment type="function">
    <text evidence="1">Bidirectionally degrades single-stranded DNA into large acid-insoluble oligonucleotides, which are then degraded further into small acid-soluble oligonucleotides.</text>
</comment>
<comment type="catalytic activity">
    <reaction evidence="1">
        <text>Exonucleolytic cleavage in either 5'- to 3'- or 3'- to 5'-direction to yield nucleoside 5'-phosphates.</text>
        <dbReference type="EC" id="3.1.11.6"/>
    </reaction>
</comment>
<comment type="subunit">
    <text evidence="1">Heterooligomer composed of large and small subunits.</text>
</comment>
<comment type="subcellular location">
    <subcellularLocation>
        <location evidence="1">Cytoplasm</location>
    </subcellularLocation>
</comment>
<comment type="similarity">
    <text evidence="1">Belongs to the XseA family.</text>
</comment>
<organism>
    <name type="scientific">Vibrio cholerae serotype O1 (strain ATCC 39315 / El Tor Inaba N16961)</name>
    <dbReference type="NCBI Taxonomy" id="243277"/>
    <lineage>
        <taxon>Bacteria</taxon>
        <taxon>Pseudomonadati</taxon>
        <taxon>Pseudomonadota</taxon>
        <taxon>Gammaproteobacteria</taxon>
        <taxon>Vibrionales</taxon>
        <taxon>Vibrionaceae</taxon>
        <taxon>Vibrio</taxon>
    </lineage>
</organism>
<evidence type="ECO:0000255" key="1">
    <source>
        <dbReference type="HAMAP-Rule" id="MF_00378"/>
    </source>
</evidence>
<dbReference type="EC" id="3.1.11.6" evidence="1"/>
<dbReference type="EMBL" id="AE003852">
    <property type="protein sequence ID" value="AAF93931.1"/>
    <property type="molecule type" value="Genomic_DNA"/>
</dbReference>
<dbReference type="PIR" id="B82282">
    <property type="entry name" value="B82282"/>
</dbReference>
<dbReference type="RefSeq" id="NP_230415.1">
    <property type="nucleotide sequence ID" value="NC_002505.1"/>
</dbReference>
<dbReference type="RefSeq" id="WP_000099131.1">
    <property type="nucleotide sequence ID" value="NZ_LT906614.1"/>
</dbReference>
<dbReference type="SMR" id="Q9KTW4"/>
<dbReference type="STRING" id="243277.VC_0766"/>
<dbReference type="DNASU" id="2615309"/>
<dbReference type="EnsemblBacteria" id="AAF93931">
    <property type="protein sequence ID" value="AAF93931"/>
    <property type="gene ID" value="VC_0766"/>
</dbReference>
<dbReference type="KEGG" id="vch:VC_0766"/>
<dbReference type="PATRIC" id="fig|243277.26.peg.730"/>
<dbReference type="eggNOG" id="COG1570">
    <property type="taxonomic scope" value="Bacteria"/>
</dbReference>
<dbReference type="HOGENOM" id="CLU_023625_3_1_6"/>
<dbReference type="Proteomes" id="UP000000584">
    <property type="component" value="Chromosome 1"/>
</dbReference>
<dbReference type="GO" id="GO:0005737">
    <property type="term" value="C:cytoplasm"/>
    <property type="evidence" value="ECO:0007669"/>
    <property type="project" value="UniProtKB-SubCell"/>
</dbReference>
<dbReference type="GO" id="GO:0009318">
    <property type="term" value="C:exodeoxyribonuclease VII complex"/>
    <property type="evidence" value="ECO:0007669"/>
    <property type="project" value="InterPro"/>
</dbReference>
<dbReference type="GO" id="GO:0008855">
    <property type="term" value="F:exodeoxyribonuclease VII activity"/>
    <property type="evidence" value="ECO:0007669"/>
    <property type="project" value="UniProtKB-UniRule"/>
</dbReference>
<dbReference type="GO" id="GO:0003676">
    <property type="term" value="F:nucleic acid binding"/>
    <property type="evidence" value="ECO:0007669"/>
    <property type="project" value="InterPro"/>
</dbReference>
<dbReference type="GO" id="GO:0006308">
    <property type="term" value="P:DNA catabolic process"/>
    <property type="evidence" value="ECO:0007669"/>
    <property type="project" value="UniProtKB-UniRule"/>
</dbReference>
<dbReference type="CDD" id="cd04489">
    <property type="entry name" value="ExoVII_LU_OBF"/>
    <property type="match status" value="1"/>
</dbReference>
<dbReference type="HAMAP" id="MF_00378">
    <property type="entry name" value="Exonuc_7_L"/>
    <property type="match status" value="1"/>
</dbReference>
<dbReference type="InterPro" id="IPR003753">
    <property type="entry name" value="Exonuc_VII_L"/>
</dbReference>
<dbReference type="InterPro" id="IPR020579">
    <property type="entry name" value="Exonuc_VII_lsu_C"/>
</dbReference>
<dbReference type="InterPro" id="IPR025824">
    <property type="entry name" value="OB-fold_nuc-bd_dom"/>
</dbReference>
<dbReference type="NCBIfam" id="TIGR00237">
    <property type="entry name" value="xseA"/>
    <property type="match status" value="1"/>
</dbReference>
<dbReference type="PANTHER" id="PTHR30008">
    <property type="entry name" value="EXODEOXYRIBONUCLEASE 7 LARGE SUBUNIT"/>
    <property type="match status" value="1"/>
</dbReference>
<dbReference type="PANTHER" id="PTHR30008:SF0">
    <property type="entry name" value="EXODEOXYRIBONUCLEASE 7 LARGE SUBUNIT"/>
    <property type="match status" value="1"/>
</dbReference>
<dbReference type="Pfam" id="PF02601">
    <property type="entry name" value="Exonuc_VII_L"/>
    <property type="match status" value="1"/>
</dbReference>
<dbReference type="Pfam" id="PF13742">
    <property type="entry name" value="tRNA_anti_2"/>
    <property type="match status" value="1"/>
</dbReference>
<protein>
    <recommendedName>
        <fullName evidence="1">Exodeoxyribonuclease 7 large subunit</fullName>
        <ecNumber evidence="1">3.1.11.6</ecNumber>
    </recommendedName>
    <alternativeName>
        <fullName evidence="1">Exodeoxyribonuclease VII large subunit</fullName>
        <shortName evidence="1">Exonuclease VII large subunit</shortName>
    </alternativeName>
</protein>
<name>EX7L_VIBCH</name>